<proteinExistence type="inferred from homology"/>
<comment type="function">
    <text evidence="1">Could be a nuclease involved in processing of the 5'-end of pre-16S rRNA.</text>
</comment>
<comment type="subcellular location">
    <subcellularLocation>
        <location evidence="1">Cytoplasm</location>
    </subcellularLocation>
</comment>
<comment type="similarity">
    <text evidence="1">Belongs to the YqgF nuclease family.</text>
</comment>
<sequence>MANRTIIAFDFGTKSIGVAIGQEVTGTARALTAFKAQDGTPDWQQVEKLLKEWQPNLVVVGLPLNMDGTEQPLTARARRFANRLHGRFGVQIALQDERLSTVEARANLFDRGGYRALDKGSVDAASAVIILESWFDEQAG</sequence>
<dbReference type="EC" id="3.1.-.-" evidence="1"/>
<dbReference type="EMBL" id="CP001048">
    <property type="protein sequence ID" value="ACC90297.1"/>
    <property type="molecule type" value="Genomic_DNA"/>
</dbReference>
<dbReference type="SMR" id="B2K0T4"/>
<dbReference type="KEGG" id="ypb:YPTS_3342"/>
<dbReference type="PATRIC" id="fig|502801.10.peg.2783"/>
<dbReference type="GO" id="GO:0005829">
    <property type="term" value="C:cytosol"/>
    <property type="evidence" value="ECO:0007669"/>
    <property type="project" value="TreeGrafter"/>
</dbReference>
<dbReference type="GO" id="GO:0004518">
    <property type="term" value="F:nuclease activity"/>
    <property type="evidence" value="ECO:0007669"/>
    <property type="project" value="UniProtKB-KW"/>
</dbReference>
<dbReference type="GO" id="GO:0000967">
    <property type="term" value="P:rRNA 5'-end processing"/>
    <property type="evidence" value="ECO:0007669"/>
    <property type="project" value="UniProtKB-UniRule"/>
</dbReference>
<dbReference type="CDD" id="cd16964">
    <property type="entry name" value="YqgF"/>
    <property type="match status" value="1"/>
</dbReference>
<dbReference type="FunFam" id="3.30.420.140:FF:000002">
    <property type="entry name" value="Putative pre-16S rRNA nuclease"/>
    <property type="match status" value="1"/>
</dbReference>
<dbReference type="Gene3D" id="3.30.420.140">
    <property type="entry name" value="YqgF/RNase H-like domain"/>
    <property type="match status" value="1"/>
</dbReference>
<dbReference type="HAMAP" id="MF_00651">
    <property type="entry name" value="Nuclease_YqgF"/>
    <property type="match status" value="1"/>
</dbReference>
<dbReference type="InterPro" id="IPR012337">
    <property type="entry name" value="RNaseH-like_sf"/>
</dbReference>
<dbReference type="InterPro" id="IPR005227">
    <property type="entry name" value="YqgF"/>
</dbReference>
<dbReference type="InterPro" id="IPR006641">
    <property type="entry name" value="YqgF/RNaseH-like_dom"/>
</dbReference>
<dbReference type="InterPro" id="IPR037027">
    <property type="entry name" value="YqgF/RNaseH-like_dom_sf"/>
</dbReference>
<dbReference type="NCBIfam" id="TIGR00250">
    <property type="entry name" value="RNAse_H_YqgF"/>
    <property type="match status" value="1"/>
</dbReference>
<dbReference type="PANTHER" id="PTHR33317">
    <property type="entry name" value="POLYNUCLEOTIDYL TRANSFERASE, RIBONUCLEASE H-LIKE SUPERFAMILY PROTEIN"/>
    <property type="match status" value="1"/>
</dbReference>
<dbReference type="PANTHER" id="PTHR33317:SF4">
    <property type="entry name" value="POLYNUCLEOTIDYL TRANSFERASE, RIBONUCLEASE H-LIKE SUPERFAMILY PROTEIN"/>
    <property type="match status" value="1"/>
</dbReference>
<dbReference type="Pfam" id="PF03652">
    <property type="entry name" value="RuvX"/>
    <property type="match status" value="1"/>
</dbReference>
<dbReference type="SMART" id="SM00732">
    <property type="entry name" value="YqgFc"/>
    <property type="match status" value="1"/>
</dbReference>
<dbReference type="SUPFAM" id="SSF53098">
    <property type="entry name" value="Ribonuclease H-like"/>
    <property type="match status" value="1"/>
</dbReference>
<accession>B2K0T4</accession>
<name>YQGF_YERPB</name>
<reference key="1">
    <citation type="submission" date="2008-04" db="EMBL/GenBank/DDBJ databases">
        <title>Complete sequence of Yersinia pseudotuberculosis PB1/+.</title>
        <authorList>
            <person name="Copeland A."/>
            <person name="Lucas S."/>
            <person name="Lapidus A."/>
            <person name="Glavina del Rio T."/>
            <person name="Dalin E."/>
            <person name="Tice H."/>
            <person name="Bruce D."/>
            <person name="Goodwin L."/>
            <person name="Pitluck S."/>
            <person name="Munk A.C."/>
            <person name="Brettin T."/>
            <person name="Detter J.C."/>
            <person name="Han C."/>
            <person name="Tapia R."/>
            <person name="Schmutz J."/>
            <person name="Larimer F."/>
            <person name="Land M."/>
            <person name="Hauser L."/>
            <person name="Challacombe J.F."/>
            <person name="Green L."/>
            <person name="Lindler L.E."/>
            <person name="Nikolich M.P."/>
            <person name="Richardson P."/>
        </authorList>
    </citation>
    <scope>NUCLEOTIDE SEQUENCE [LARGE SCALE GENOMIC DNA]</scope>
    <source>
        <strain>PB1/+</strain>
    </source>
</reference>
<gene>
    <name evidence="1" type="primary">yqgF</name>
    <name type="ordered locus">YPTS_3342</name>
</gene>
<organism>
    <name type="scientific">Yersinia pseudotuberculosis serotype IB (strain PB1/+)</name>
    <dbReference type="NCBI Taxonomy" id="502801"/>
    <lineage>
        <taxon>Bacteria</taxon>
        <taxon>Pseudomonadati</taxon>
        <taxon>Pseudomonadota</taxon>
        <taxon>Gammaproteobacteria</taxon>
        <taxon>Enterobacterales</taxon>
        <taxon>Yersiniaceae</taxon>
        <taxon>Yersinia</taxon>
    </lineage>
</organism>
<feature type="chain" id="PRO_1000131090" description="Putative pre-16S rRNA nuclease">
    <location>
        <begin position="1"/>
        <end position="140"/>
    </location>
</feature>
<protein>
    <recommendedName>
        <fullName evidence="1">Putative pre-16S rRNA nuclease</fullName>
        <ecNumber evidence="1">3.1.-.-</ecNumber>
    </recommendedName>
</protein>
<evidence type="ECO:0000255" key="1">
    <source>
        <dbReference type="HAMAP-Rule" id="MF_00651"/>
    </source>
</evidence>
<keyword id="KW-0963">Cytoplasm</keyword>
<keyword id="KW-0378">Hydrolase</keyword>
<keyword id="KW-0540">Nuclease</keyword>
<keyword id="KW-0690">Ribosome biogenesis</keyword>